<keyword id="KW-0614">Plasmid</keyword>
<keyword id="KW-1185">Reference proteome</keyword>
<name>YZ39_AQUAE</name>
<feature type="chain" id="PRO_0000187005" description="Uncharacterized protein aq_aa39">
    <location>
        <begin position="1"/>
        <end position="231"/>
    </location>
</feature>
<feature type="region of interest" description="Disordered" evidence="1">
    <location>
        <begin position="1"/>
        <end position="35"/>
    </location>
</feature>
<feature type="compositionally biased region" description="Basic and acidic residues" evidence="1">
    <location>
        <begin position="1"/>
        <end position="10"/>
    </location>
</feature>
<feature type="compositionally biased region" description="Low complexity" evidence="1">
    <location>
        <begin position="11"/>
        <end position="24"/>
    </location>
</feature>
<feature type="compositionally biased region" description="Polar residues" evidence="1">
    <location>
        <begin position="25"/>
        <end position="35"/>
    </location>
</feature>
<accession>O66427</accession>
<reference key="1">
    <citation type="journal article" date="1998" name="Nature">
        <title>The complete genome of the hyperthermophilic bacterium Aquifex aeolicus.</title>
        <authorList>
            <person name="Deckert G."/>
            <person name="Warren P.V."/>
            <person name="Gaasterland T."/>
            <person name="Young W.G."/>
            <person name="Lenox A.L."/>
            <person name="Graham D.E."/>
            <person name="Overbeek R."/>
            <person name="Snead M.A."/>
            <person name="Keller M."/>
            <person name="Aujay M."/>
            <person name="Huber R."/>
            <person name="Feldman R.A."/>
            <person name="Short J.M."/>
            <person name="Olsen G.J."/>
            <person name="Swanson R.V."/>
        </authorList>
    </citation>
    <scope>NUCLEOTIDE SEQUENCE [LARGE SCALE GENOMIC DNA]</scope>
    <source>
        <strain>VF5</strain>
    </source>
</reference>
<proteinExistence type="predicted"/>
<evidence type="ECO:0000256" key="1">
    <source>
        <dbReference type="SAM" id="MobiDB-lite"/>
    </source>
</evidence>
<gene>
    <name type="ordered locus">aq_aa39</name>
</gene>
<dbReference type="EMBL" id="AE000667">
    <property type="protein sequence ID" value="AAC07979.1"/>
    <property type="molecule type" value="Genomic_DNA"/>
</dbReference>
<dbReference type="RefSeq" id="NP_046427.1">
    <property type="nucleotide sequence ID" value="NC_001880.1"/>
</dbReference>
<dbReference type="RefSeq" id="WP_010890573.1">
    <property type="nucleotide sequence ID" value="NC_001880.1"/>
</dbReference>
<dbReference type="EnsemblBacteria" id="AAC07979">
    <property type="protein sequence ID" value="AAC07979"/>
    <property type="gene ID" value="aq_aa39"/>
</dbReference>
<dbReference type="KEGG" id="aae:aq_aa39"/>
<dbReference type="HOGENOM" id="CLU_1197794_0_0_0"/>
<dbReference type="InParanoid" id="O66427"/>
<dbReference type="Proteomes" id="UP000000798">
    <property type="component" value="Plasmid ece1"/>
</dbReference>
<organism>
    <name type="scientific">Aquifex aeolicus (strain VF5)</name>
    <dbReference type="NCBI Taxonomy" id="224324"/>
    <lineage>
        <taxon>Bacteria</taxon>
        <taxon>Pseudomonadati</taxon>
        <taxon>Aquificota</taxon>
        <taxon>Aquificia</taxon>
        <taxon>Aquificales</taxon>
        <taxon>Aquificaceae</taxon>
        <taxon>Aquifex</taxon>
    </lineage>
</organism>
<sequence length="231" mass="27534">MDGKKREVENGKNGNNIKDGNSSNTTNYGKDTKTTQTIKDVKDVKSVKKAFKELQEWLREKMKKEGLVRFMKDGYPLEFVEEDVVYFLGSRKRPNLKDFIKGITLVRTYAKLRERRKQFHKRSKKPIVKKYSAPKYTRVVAYMYRVLEEKGYTPDDRKRLIVYFFNFIKPDYMSNAGIYVCLEKFRTAKFLRNKKIEELRKELIKEIPPHLFLQIEAFLSLFPTFKRKKAT</sequence>
<protein>
    <recommendedName>
        <fullName>Uncharacterized protein aq_aa39</fullName>
    </recommendedName>
</protein>
<geneLocation type="plasmid">
    <name>ece1</name>
</geneLocation>